<keyword id="KW-0131">Cell cycle</keyword>
<keyword id="KW-0963">Cytoplasm</keyword>
<keyword id="KW-0217">Developmental protein</keyword>
<keyword id="KW-0221">Differentiation</keyword>
<keyword id="KW-0338">Growth arrest</keyword>
<keyword id="KW-1185">Reference proteome</keyword>
<evidence type="ECO:0000250" key="1">
    <source>
        <dbReference type="UniProtKB" id="Q8N3F0"/>
    </source>
</evidence>
<evidence type="ECO:0000256" key="2">
    <source>
        <dbReference type="SAM" id="MobiDB-lite"/>
    </source>
</evidence>
<evidence type="ECO:0000269" key="3">
    <source>
    </source>
</evidence>
<evidence type="ECO:0000305" key="4"/>
<sequence>MDFQQLADVADKWCSNTPFDLIATEETERRMDFYADPGVSFYVLCPESGCGDHFHVWSESEDCLPFLQLAQDYISSCGKKTLHEILEKVFKSFRPLLGLPDVDDDTFEEYNADVEEEEPEADHQQMGVSQQ</sequence>
<name>MTURN_XENLA</name>
<proteinExistence type="evidence at transcript level"/>
<reference key="1">
    <citation type="submission" date="2003-01" db="EMBL/GenBank/DDBJ databases">
        <authorList>
            <consortium name="NIH - Xenopus Gene Collection (XGC) project"/>
        </authorList>
    </citation>
    <scope>NUCLEOTIDE SEQUENCE [LARGE SCALE MRNA]</scope>
    <source>
        <tissue>Embryo</tissue>
    </source>
</reference>
<reference key="2">
    <citation type="journal article" date="2013" name="Dev. Biol.">
        <title>Maturin is a novel protein required for differentiation during primary neurogenesis.</title>
        <authorList>
            <person name="Martinez-De Luna R.I."/>
            <person name="Ku R.Y."/>
            <person name="Lyou Y."/>
            <person name="Zuber M.E."/>
        </authorList>
    </citation>
    <scope>FUNCTION</scope>
    <scope>INDUCTION</scope>
    <scope>DEVELOPMENTAL STAGE</scope>
    <scope>DISRUPTION PHENOTYPE</scope>
</reference>
<dbReference type="EMBL" id="BC045253">
    <property type="protein sequence ID" value="AAH45253.1"/>
    <property type="molecule type" value="mRNA"/>
</dbReference>
<dbReference type="EMBL" id="BC071157">
    <property type="protein sequence ID" value="AAH71157.1"/>
    <property type="molecule type" value="mRNA"/>
</dbReference>
<dbReference type="RefSeq" id="NP_001079626.1">
    <property type="nucleotide sequence ID" value="NM_001086157.1"/>
</dbReference>
<dbReference type="RefSeq" id="NP_001085379.1">
    <property type="nucleotide sequence ID" value="NM_001091910.1"/>
</dbReference>
<dbReference type="SMR" id="Q7ZX36"/>
<dbReference type="DNASU" id="379313"/>
<dbReference type="GeneID" id="379313"/>
<dbReference type="KEGG" id="xla:379313"/>
<dbReference type="AGR" id="Xenbase:XB-GENE-945490"/>
<dbReference type="CTD" id="379313"/>
<dbReference type="Xenbase" id="XB-GENE-945490">
    <property type="gene designation" value="mturn.S"/>
</dbReference>
<dbReference type="OrthoDB" id="9922400at2759"/>
<dbReference type="Proteomes" id="UP000186698">
    <property type="component" value="Chromosome 6S"/>
</dbReference>
<dbReference type="Bgee" id="379313">
    <property type="expression patterns" value="Expressed in brain and 19 other cell types or tissues"/>
</dbReference>
<dbReference type="GO" id="GO:0005737">
    <property type="term" value="C:cytoplasm"/>
    <property type="evidence" value="ECO:0000250"/>
    <property type="project" value="UniProtKB"/>
</dbReference>
<dbReference type="GO" id="GO:0007406">
    <property type="term" value="P:negative regulation of neuroblast proliferation"/>
    <property type="evidence" value="ECO:0000315"/>
    <property type="project" value="UniProtKB"/>
</dbReference>
<dbReference type="GO" id="GO:0021990">
    <property type="term" value="P:neural plate formation"/>
    <property type="evidence" value="ECO:0000315"/>
    <property type="project" value="UniProtKB"/>
</dbReference>
<dbReference type="GO" id="GO:0048666">
    <property type="term" value="P:neuron development"/>
    <property type="evidence" value="ECO:0000314"/>
    <property type="project" value="MGI"/>
</dbReference>
<dbReference type="GO" id="GO:0045654">
    <property type="term" value="P:positive regulation of megakaryocyte differentiation"/>
    <property type="evidence" value="ECO:0000250"/>
    <property type="project" value="UniProtKB"/>
</dbReference>
<dbReference type="GO" id="GO:0045666">
    <property type="term" value="P:positive regulation of neuron differentiation"/>
    <property type="evidence" value="ECO:0000314"/>
    <property type="project" value="UniProtKB"/>
</dbReference>
<dbReference type="GO" id="GO:0051726">
    <property type="term" value="P:regulation of cell cycle"/>
    <property type="evidence" value="ECO:0007669"/>
    <property type="project" value="UniProtKB-KW"/>
</dbReference>
<dbReference type="GO" id="GO:0023051">
    <property type="term" value="P:regulation of signaling"/>
    <property type="evidence" value="ECO:0000318"/>
    <property type="project" value="GO_Central"/>
</dbReference>
<dbReference type="InterPro" id="IPR027892">
    <property type="entry name" value="Maturin"/>
</dbReference>
<dbReference type="PANTHER" id="PTHR32008">
    <property type="entry name" value="MATURIN"/>
    <property type="match status" value="1"/>
</dbReference>
<dbReference type="PANTHER" id="PTHR32008:SF2">
    <property type="entry name" value="MATURIN"/>
    <property type="match status" value="1"/>
</dbReference>
<dbReference type="Pfam" id="PF15167">
    <property type="entry name" value="DUF4581"/>
    <property type="match status" value="1"/>
</dbReference>
<protein>
    <recommendedName>
        <fullName>Maturin</fullName>
    </recommendedName>
    <alternativeName>
        <fullName>Maturin neural progenitor differentiation regulator protein</fullName>
    </alternativeName>
</protein>
<accession>Q7ZX36</accession>
<accession>Q6GQZ4</accession>
<feature type="chain" id="PRO_0000294236" description="Maturin">
    <location>
        <begin position="1"/>
        <end position="131"/>
    </location>
</feature>
<feature type="region of interest" description="Disordered" evidence="2">
    <location>
        <begin position="107"/>
        <end position="131"/>
    </location>
</feature>
<feature type="compositionally biased region" description="Acidic residues" evidence="2">
    <location>
        <begin position="107"/>
        <end position="120"/>
    </location>
</feature>
<feature type="sequence conflict" description="In Ref. 1; AAH71157." evidence="4" ref="1">
    <original>H</original>
    <variation>N</variation>
    <location>
        <position position="83"/>
    </location>
</feature>
<comment type="function">
    <text evidence="1 3">Involved in early neuronal development; required for cell cycle exit and differentiation of primary neurons (By similarity). Cooperates synergistically with pak3 to promote primary neural differentiation within the neural plate (PubMed:24095902). May play a role in promoting megakaryocyte differentiation (By similarity).</text>
</comment>
<comment type="subcellular location">
    <subcellularLocation>
        <location evidence="1">Cytoplasm</location>
    </subcellularLocation>
</comment>
<comment type="developmental stage">
    <text evidence="3">Maternally expressed. Expressed at the animal half during the blastula stage. Expressed in the central, posterior and anterior neural plate regions, including the eye field at stage 12.5. Expressed in the posterior neural plate at stage 15. Later on, expressed in the developing nervous system. Expressed through the eye vesicle at stage 20. Strongly expressed in differentiating primary neurons in the brain, spinal cord and retina from stages 24 to 31. Not detected in the lens at any developmental stages.</text>
</comment>
<comment type="induction">
    <text evidence="3">Up-regulated by the proneural transcription factors Neurog2, Neurod1 and Ebf3.</text>
</comment>
<comment type="disruption phenotype">
    <text evidence="3">Morpholino knockdown of the protein causes an accumulation of neuronal progenitor cells resulting in the neural plate expansion.</text>
</comment>
<comment type="similarity">
    <text evidence="4">Belongs to the MTURN family.</text>
</comment>
<gene>
    <name type="primary">mturn</name>
    <name type="synonym">C7orf41</name>
</gene>
<organism>
    <name type="scientific">Xenopus laevis</name>
    <name type="common">African clawed frog</name>
    <dbReference type="NCBI Taxonomy" id="8355"/>
    <lineage>
        <taxon>Eukaryota</taxon>
        <taxon>Metazoa</taxon>
        <taxon>Chordata</taxon>
        <taxon>Craniata</taxon>
        <taxon>Vertebrata</taxon>
        <taxon>Euteleostomi</taxon>
        <taxon>Amphibia</taxon>
        <taxon>Batrachia</taxon>
        <taxon>Anura</taxon>
        <taxon>Pipoidea</taxon>
        <taxon>Pipidae</taxon>
        <taxon>Xenopodinae</taxon>
        <taxon>Xenopus</taxon>
        <taxon>Xenopus</taxon>
    </lineage>
</organism>